<sequence length="61" mass="7207">MARKAIIEKWSKTPKYKTRAYTRCRICGRPHAVLRKYGVCRICFRELAYKGEIPGCRKASW</sequence>
<name>RS14Z_CLOBA</name>
<organism>
    <name type="scientific">Clostridium botulinum (strain Alaska E43 / Type E3)</name>
    <dbReference type="NCBI Taxonomy" id="508767"/>
    <lineage>
        <taxon>Bacteria</taxon>
        <taxon>Bacillati</taxon>
        <taxon>Bacillota</taxon>
        <taxon>Clostridia</taxon>
        <taxon>Eubacteriales</taxon>
        <taxon>Clostridiaceae</taxon>
        <taxon>Clostridium</taxon>
    </lineage>
</organism>
<gene>
    <name evidence="1" type="primary">rpsZ</name>
    <name evidence="1" type="synonym">rpsN</name>
    <name type="ordered locus">CLH_0250</name>
</gene>
<evidence type="ECO:0000255" key="1">
    <source>
        <dbReference type="HAMAP-Rule" id="MF_01364"/>
    </source>
</evidence>
<evidence type="ECO:0000305" key="2"/>
<protein>
    <recommendedName>
        <fullName evidence="1">Small ribosomal subunit protein uS14</fullName>
    </recommendedName>
    <alternativeName>
        <fullName evidence="2">30S ribosomal protein S14 type Z</fullName>
    </alternativeName>
</protein>
<keyword id="KW-0479">Metal-binding</keyword>
<keyword id="KW-0687">Ribonucleoprotein</keyword>
<keyword id="KW-0689">Ribosomal protein</keyword>
<keyword id="KW-0694">RNA-binding</keyword>
<keyword id="KW-0699">rRNA-binding</keyword>
<keyword id="KW-0862">Zinc</keyword>
<feature type="chain" id="PRO_1000143890" description="Small ribosomal subunit protein uS14">
    <location>
        <begin position="1"/>
        <end position="61"/>
    </location>
</feature>
<feature type="binding site" evidence="1">
    <location>
        <position position="24"/>
    </location>
    <ligand>
        <name>Zn(2+)</name>
        <dbReference type="ChEBI" id="CHEBI:29105"/>
    </ligand>
</feature>
<feature type="binding site" evidence="1">
    <location>
        <position position="27"/>
    </location>
    <ligand>
        <name>Zn(2+)</name>
        <dbReference type="ChEBI" id="CHEBI:29105"/>
    </ligand>
</feature>
<feature type="binding site" evidence="1">
    <location>
        <position position="40"/>
    </location>
    <ligand>
        <name>Zn(2+)</name>
        <dbReference type="ChEBI" id="CHEBI:29105"/>
    </ligand>
</feature>
<feature type="binding site" evidence="1">
    <location>
        <position position="43"/>
    </location>
    <ligand>
        <name>Zn(2+)</name>
        <dbReference type="ChEBI" id="CHEBI:29105"/>
    </ligand>
</feature>
<proteinExistence type="inferred from homology"/>
<dbReference type="EMBL" id="CP001078">
    <property type="protein sequence ID" value="ACD53100.1"/>
    <property type="molecule type" value="Genomic_DNA"/>
</dbReference>
<dbReference type="RefSeq" id="WP_003372253.1">
    <property type="nucleotide sequence ID" value="NC_010723.1"/>
</dbReference>
<dbReference type="SMR" id="B2UYC3"/>
<dbReference type="KEGG" id="cbt:CLH_0250"/>
<dbReference type="HOGENOM" id="CLU_139869_3_0_9"/>
<dbReference type="GO" id="GO:0005737">
    <property type="term" value="C:cytoplasm"/>
    <property type="evidence" value="ECO:0007669"/>
    <property type="project" value="UniProtKB-ARBA"/>
</dbReference>
<dbReference type="GO" id="GO:0015935">
    <property type="term" value="C:small ribosomal subunit"/>
    <property type="evidence" value="ECO:0007669"/>
    <property type="project" value="TreeGrafter"/>
</dbReference>
<dbReference type="GO" id="GO:0019843">
    <property type="term" value="F:rRNA binding"/>
    <property type="evidence" value="ECO:0007669"/>
    <property type="project" value="UniProtKB-UniRule"/>
</dbReference>
<dbReference type="GO" id="GO:0003735">
    <property type="term" value="F:structural constituent of ribosome"/>
    <property type="evidence" value="ECO:0007669"/>
    <property type="project" value="InterPro"/>
</dbReference>
<dbReference type="GO" id="GO:0008270">
    <property type="term" value="F:zinc ion binding"/>
    <property type="evidence" value="ECO:0007669"/>
    <property type="project" value="UniProtKB-UniRule"/>
</dbReference>
<dbReference type="GO" id="GO:0006412">
    <property type="term" value="P:translation"/>
    <property type="evidence" value="ECO:0007669"/>
    <property type="project" value="UniProtKB-UniRule"/>
</dbReference>
<dbReference type="FunFam" id="4.10.830.10:FF:000001">
    <property type="entry name" value="30S ribosomal protein S14 type Z"/>
    <property type="match status" value="1"/>
</dbReference>
<dbReference type="Gene3D" id="4.10.830.10">
    <property type="entry name" value="30s Ribosomal Protein S14, Chain N"/>
    <property type="match status" value="1"/>
</dbReference>
<dbReference type="HAMAP" id="MF_01364_B">
    <property type="entry name" value="Ribosomal_uS14_2_B"/>
    <property type="match status" value="1"/>
</dbReference>
<dbReference type="InterPro" id="IPR001209">
    <property type="entry name" value="Ribosomal_uS14"/>
</dbReference>
<dbReference type="InterPro" id="IPR023053">
    <property type="entry name" value="Ribosomal_uS14_bact"/>
</dbReference>
<dbReference type="InterPro" id="IPR043140">
    <property type="entry name" value="Ribosomal_uS14_sf"/>
</dbReference>
<dbReference type="NCBIfam" id="NF005974">
    <property type="entry name" value="PRK08061.1"/>
    <property type="match status" value="1"/>
</dbReference>
<dbReference type="PANTHER" id="PTHR19836">
    <property type="entry name" value="30S RIBOSOMAL PROTEIN S14"/>
    <property type="match status" value="1"/>
</dbReference>
<dbReference type="PANTHER" id="PTHR19836:SF19">
    <property type="entry name" value="SMALL RIBOSOMAL SUBUNIT PROTEIN US14M"/>
    <property type="match status" value="1"/>
</dbReference>
<dbReference type="Pfam" id="PF00253">
    <property type="entry name" value="Ribosomal_S14"/>
    <property type="match status" value="1"/>
</dbReference>
<dbReference type="SUPFAM" id="SSF57716">
    <property type="entry name" value="Glucocorticoid receptor-like (DNA-binding domain)"/>
    <property type="match status" value="1"/>
</dbReference>
<reference key="1">
    <citation type="submission" date="2008-05" db="EMBL/GenBank/DDBJ databases">
        <title>Complete genome sequence of Clostridium botulinum E3 str. Alaska E43.</title>
        <authorList>
            <person name="Brinkac L.M."/>
            <person name="Brown J.L."/>
            <person name="Bruce D."/>
            <person name="Detter C."/>
            <person name="Munk C."/>
            <person name="Smith L.A."/>
            <person name="Smith T.J."/>
            <person name="Sutton G."/>
            <person name="Brettin T.S."/>
        </authorList>
    </citation>
    <scope>NUCLEOTIDE SEQUENCE [LARGE SCALE GENOMIC DNA]</scope>
    <source>
        <strain>Alaska E43 / Type E3</strain>
    </source>
</reference>
<comment type="function">
    <text evidence="1">Binds 16S rRNA, required for the assembly of 30S particles and may also be responsible for determining the conformation of the 16S rRNA at the A site.</text>
</comment>
<comment type="cofactor">
    <cofactor evidence="1">
        <name>Zn(2+)</name>
        <dbReference type="ChEBI" id="CHEBI:29105"/>
    </cofactor>
    <text evidence="1">Binds 1 zinc ion per subunit.</text>
</comment>
<comment type="subunit">
    <text evidence="1">Part of the 30S ribosomal subunit. Contacts proteins S3 and S10.</text>
</comment>
<comment type="similarity">
    <text evidence="1">Belongs to the universal ribosomal protein uS14 family. Zinc-binding uS14 subfamily.</text>
</comment>
<accession>B2UYC3</accession>